<feature type="chain" id="PRO_0000230244" description="Glycogen synthase">
    <location>
        <begin position="1"/>
        <end position="476"/>
    </location>
</feature>
<feature type="binding site" evidence="1">
    <location>
        <position position="15"/>
    </location>
    <ligand>
        <name>ADP-alpha-D-glucose</name>
        <dbReference type="ChEBI" id="CHEBI:57498"/>
    </ligand>
</feature>
<proteinExistence type="inferred from homology"/>
<organism>
    <name type="scientific">Lactobacillus acidophilus (strain ATCC 700396 / NCK56 / N2 / NCFM)</name>
    <dbReference type="NCBI Taxonomy" id="272621"/>
    <lineage>
        <taxon>Bacteria</taxon>
        <taxon>Bacillati</taxon>
        <taxon>Bacillota</taxon>
        <taxon>Bacilli</taxon>
        <taxon>Lactobacillales</taxon>
        <taxon>Lactobacillaceae</taxon>
        <taxon>Lactobacillus</taxon>
    </lineage>
</organism>
<name>GLGA_LACAC</name>
<keyword id="KW-0320">Glycogen biosynthesis</keyword>
<keyword id="KW-0328">Glycosyltransferase</keyword>
<keyword id="KW-1185">Reference proteome</keyword>
<keyword id="KW-0808">Transferase</keyword>
<sequence length="476" mass="54822">MRVLFTGAECAPFFKTGGLGDVLGSLPNQLAKEGVDVGVVLPLYQDLPEKYRKNLKYQGNFIVPVGWRNQYCGIFTLKLNGVNYFFIDNEYYFKRPGIYGYYDDGERYAYFQQAVIMMMERFDFIPDVLHCNDYHTAFIPFLLHEKWGFVDAYKGIKTILTIHNLEFQGKYNAKTLPDFFGMNYDWFDSGIVRMDNDVNWMKTGILYADRVTTVSPSYAREIQTVEFGQGLDAILRMCSHKLTGILNGIDFEKYNPKTDPVIKKNYDVYHLHHKSKDKIALQKELDLPIKPNIPLIGMVSRLTAQKGCQLLLDELDNILQFNVQIVILGNGDPYYEHRLMEIAERYPDKLKVILAFDVKLAQRIYAGADSFLMPSAFEPCGLSQLIALRYGTLPIVHEIGGLADTVWVYDETTNEGTGFGFKEFSGYQMVQAIKKMLALYQQKNNWLKIQKIAMKSDFSWKNSADKYKWMYGELIG</sequence>
<comment type="function">
    <text evidence="1">Synthesizes alpha-1,4-glucan chains using ADP-glucose.</text>
</comment>
<comment type="catalytic activity">
    <reaction evidence="1">
        <text>[(1-&gt;4)-alpha-D-glucosyl](n) + ADP-alpha-D-glucose = [(1-&gt;4)-alpha-D-glucosyl](n+1) + ADP + H(+)</text>
        <dbReference type="Rhea" id="RHEA:18189"/>
        <dbReference type="Rhea" id="RHEA-COMP:9584"/>
        <dbReference type="Rhea" id="RHEA-COMP:9587"/>
        <dbReference type="ChEBI" id="CHEBI:15378"/>
        <dbReference type="ChEBI" id="CHEBI:15444"/>
        <dbReference type="ChEBI" id="CHEBI:57498"/>
        <dbReference type="ChEBI" id="CHEBI:456216"/>
        <dbReference type="EC" id="2.4.1.21"/>
    </reaction>
</comment>
<comment type="pathway">
    <text evidence="1">Glycan biosynthesis; glycogen biosynthesis.</text>
</comment>
<comment type="similarity">
    <text evidence="1">Belongs to the glycosyltransferase 1 family. Bacterial/plant glycogen synthase subfamily.</text>
</comment>
<reference key="1">
    <citation type="journal article" date="2005" name="Proc. Natl. Acad. Sci. U.S.A.">
        <title>Complete genome sequence of the probiotic lactic acid bacterium Lactobacillus acidophilus NCFM.</title>
        <authorList>
            <person name="Altermann E."/>
            <person name="Russell W.M."/>
            <person name="Azcarate-Peril M.A."/>
            <person name="Barrangou R."/>
            <person name="Buck B.L."/>
            <person name="McAuliffe O."/>
            <person name="Souther N."/>
            <person name="Dobson A."/>
            <person name="Duong T."/>
            <person name="Callanan M."/>
            <person name="Lick S."/>
            <person name="Hamrick A."/>
            <person name="Cano R."/>
            <person name="Klaenhammer T.R."/>
        </authorList>
    </citation>
    <scope>NUCLEOTIDE SEQUENCE [LARGE SCALE GENOMIC DNA]</scope>
    <source>
        <strain>ATCC 700396 / NCK56 / N2 / NCFM</strain>
    </source>
</reference>
<gene>
    <name evidence="1" type="primary">glgA</name>
    <name type="ordered locus">LBA0683</name>
</gene>
<protein>
    <recommendedName>
        <fullName evidence="1">Glycogen synthase</fullName>
        <ecNumber evidence="1">2.4.1.21</ecNumber>
    </recommendedName>
    <alternativeName>
        <fullName evidence="1">Starch [bacterial glycogen] synthase</fullName>
    </alternativeName>
</protein>
<accession>Q5FL65</accession>
<dbReference type="EC" id="2.4.1.21" evidence="1"/>
<dbReference type="EMBL" id="CP000033">
    <property type="protein sequence ID" value="AAV42559.1"/>
    <property type="molecule type" value="Genomic_DNA"/>
</dbReference>
<dbReference type="RefSeq" id="WP_003546574.1">
    <property type="nucleotide sequence ID" value="NC_006814.3"/>
</dbReference>
<dbReference type="RefSeq" id="YP_193590.1">
    <property type="nucleotide sequence ID" value="NC_006814.3"/>
</dbReference>
<dbReference type="SMR" id="Q5FL65"/>
<dbReference type="STRING" id="272621.LBA0683"/>
<dbReference type="CAZy" id="GT5">
    <property type="family name" value="Glycosyltransferase Family 5"/>
</dbReference>
<dbReference type="GeneID" id="93290189"/>
<dbReference type="KEGG" id="lac:LBA0683"/>
<dbReference type="PATRIC" id="fig|272621.13.peg.653"/>
<dbReference type="eggNOG" id="COG0297">
    <property type="taxonomic scope" value="Bacteria"/>
</dbReference>
<dbReference type="HOGENOM" id="CLU_009583_18_2_9"/>
<dbReference type="OrthoDB" id="9808590at2"/>
<dbReference type="BioCyc" id="LACI272621:G1G49-705-MONOMER"/>
<dbReference type="UniPathway" id="UPA00164"/>
<dbReference type="Proteomes" id="UP000006381">
    <property type="component" value="Chromosome"/>
</dbReference>
<dbReference type="GO" id="GO:0009011">
    <property type="term" value="F:alpha-1,4-glucan glucosyltransferase (ADP-glucose donor) activity"/>
    <property type="evidence" value="ECO:0007669"/>
    <property type="project" value="UniProtKB-UniRule"/>
</dbReference>
<dbReference type="GO" id="GO:0004373">
    <property type="term" value="F:alpha-1,4-glucan glucosyltransferase (UDP-glucose donor) activity"/>
    <property type="evidence" value="ECO:0007669"/>
    <property type="project" value="InterPro"/>
</dbReference>
<dbReference type="GO" id="GO:0005978">
    <property type="term" value="P:glycogen biosynthetic process"/>
    <property type="evidence" value="ECO:0007669"/>
    <property type="project" value="UniProtKB-UniRule"/>
</dbReference>
<dbReference type="CDD" id="cd03791">
    <property type="entry name" value="GT5_Glycogen_synthase_DULL1-like"/>
    <property type="match status" value="1"/>
</dbReference>
<dbReference type="Gene3D" id="3.40.50.2000">
    <property type="entry name" value="Glycogen Phosphorylase B"/>
    <property type="match status" value="2"/>
</dbReference>
<dbReference type="HAMAP" id="MF_00484">
    <property type="entry name" value="Glycogen_synth"/>
    <property type="match status" value="1"/>
</dbReference>
<dbReference type="InterPro" id="IPR001296">
    <property type="entry name" value="Glyco_trans_1"/>
</dbReference>
<dbReference type="InterPro" id="IPR011835">
    <property type="entry name" value="GS/SS"/>
</dbReference>
<dbReference type="InterPro" id="IPR013534">
    <property type="entry name" value="Starch_synth_cat_dom"/>
</dbReference>
<dbReference type="NCBIfam" id="TIGR02095">
    <property type="entry name" value="glgA"/>
    <property type="match status" value="1"/>
</dbReference>
<dbReference type="NCBIfam" id="NF001898">
    <property type="entry name" value="PRK00654.1-1"/>
    <property type="match status" value="1"/>
</dbReference>
<dbReference type="PANTHER" id="PTHR45825:SF11">
    <property type="entry name" value="ALPHA AMYLASE DOMAIN-CONTAINING PROTEIN"/>
    <property type="match status" value="1"/>
</dbReference>
<dbReference type="PANTHER" id="PTHR45825">
    <property type="entry name" value="GRANULE-BOUND STARCH SYNTHASE 1, CHLOROPLASTIC/AMYLOPLASTIC"/>
    <property type="match status" value="1"/>
</dbReference>
<dbReference type="Pfam" id="PF08323">
    <property type="entry name" value="Glyco_transf_5"/>
    <property type="match status" value="1"/>
</dbReference>
<dbReference type="Pfam" id="PF00534">
    <property type="entry name" value="Glycos_transf_1"/>
    <property type="match status" value="1"/>
</dbReference>
<dbReference type="SUPFAM" id="SSF53756">
    <property type="entry name" value="UDP-Glycosyltransferase/glycogen phosphorylase"/>
    <property type="match status" value="1"/>
</dbReference>
<evidence type="ECO:0000255" key="1">
    <source>
        <dbReference type="HAMAP-Rule" id="MF_00484"/>
    </source>
</evidence>